<protein>
    <recommendedName>
        <fullName>Nutrient stress-induced DNA-binding protein</fullName>
    </recommendedName>
</protein>
<reference key="1">
    <citation type="journal article" date="2001" name="DNA Res.">
        <title>Complete genomic sequence of the filamentous nitrogen-fixing cyanobacterium Anabaena sp. strain PCC 7120.</title>
        <authorList>
            <person name="Kaneko T."/>
            <person name="Nakamura Y."/>
            <person name="Wolk C.P."/>
            <person name="Kuritz T."/>
            <person name="Sasamoto S."/>
            <person name="Watanabe A."/>
            <person name="Iriguchi M."/>
            <person name="Ishikawa A."/>
            <person name="Kawashima K."/>
            <person name="Kimura T."/>
            <person name="Kishida Y."/>
            <person name="Kohara M."/>
            <person name="Matsumoto M."/>
            <person name="Matsuno A."/>
            <person name="Muraki A."/>
            <person name="Nakazaki N."/>
            <person name="Shimpo S."/>
            <person name="Sugimoto M."/>
            <person name="Takazawa M."/>
            <person name="Yamada M."/>
            <person name="Yasuda M."/>
            <person name="Tabata S."/>
        </authorList>
    </citation>
    <scope>NUCLEOTIDE SEQUENCE [LARGE SCALE GENOMIC DNA]</scope>
    <source>
        <strain>PCC 7120 / SAG 25.82 / UTEX 2576</strain>
    </source>
</reference>
<feature type="chain" id="PRO_0000201653" description="Nutrient stress-induced DNA-binding protein">
    <location>
        <begin position="1"/>
        <end position="184"/>
    </location>
</feature>
<keyword id="KW-0238">DNA-binding</keyword>
<keyword id="KW-0349">Heme</keyword>
<keyword id="KW-0408">Iron</keyword>
<keyword id="KW-0479">Metal-binding</keyword>
<keyword id="KW-1185">Reference proteome</keyword>
<organism>
    <name type="scientific">Nostoc sp. (strain PCC 7120 / SAG 25.82 / UTEX 2576)</name>
    <dbReference type="NCBI Taxonomy" id="103690"/>
    <lineage>
        <taxon>Bacteria</taxon>
        <taxon>Bacillati</taxon>
        <taxon>Cyanobacteriota</taxon>
        <taxon>Cyanophyceae</taxon>
        <taxon>Nostocales</taxon>
        <taxon>Nostocaceae</taxon>
        <taxon>Nostoc</taxon>
    </lineage>
</organism>
<proteinExistence type="inferred from homology"/>
<sequence>MADTQTLLQNFGQVYDNPVLLDRSVTAPVTEGLNVLLASFQALYLQYQKHHFVVEGAEFYSLHEFFNSSYNEVQDHVHEIGERLNGLGGVPAASFSKLAELTCFEQESDGVYSSRKMVENDLAAEQAIINVIRRQAAQAESLGDRGTRYLYEKILLKTEERAYHLAHFLAKDSLTLGFVQPAQN</sequence>
<gene>
    <name type="primary">dpsA</name>
    <name type="ordered locus">alr3808</name>
</gene>
<dbReference type="EMBL" id="BA000019">
    <property type="protein sequence ID" value="BAB75507.1"/>
    <property type="molecule type" value="Genomic_DNA"/>
</dbReference>
<dbReference type="PIR" id="AI2281">
    <property type="entry name" value="AI2281"/>
</dbReference>
<dbReference type="RefSeq" id="WP_010997949.1">
    <property type="nucleotide sequence ID" value="NZ_RSCN01000011.1"/>
</dbReference>
<dbReference type="SMR" id="Q8YQL3"/>
<dbReference type="STRING" id="103690.gene:10495850"/>
<dbReference type="KEGG" id="ana:alr3808"/>
<dbReference type="eggNOG" id="COG0783">
    <property type="taxonomic scope" value="Bacteria"/>
</dbReference>
<dbReference type="OrthoDB" id="2467436at2"/>
<dbReference type="Proteomes" id="UP000002483">
    <property type="component" value="Chromosome"/>
</dbReference>
<dbReference type="GO" id="GO:0003677">
    <property type="term" value="F:DNA binding"/>
    <property type="evidence" value="ECO:0007669"/>
    <property type="project" value="UniProtKB-KW"/>
</dbReference>
<dbReference type="GO" id="GO:0008199">
    <property type="term" value="F:ferric iron binding"/>
    <property type="evidence" value="ECO:0007669"/>
    <property type="project" value="InterPro"/>
</dbReference>
<dbReference type="GO" id="GO:0016722">
    <property type="term" value="F:oxidoreductase activity, acting on metal ions"/>
    <property type="evidence" value="ECO:0007669"/>
    <property type="project" value="InterPro"/>
</dbReference>
<dbReference type="CDD" id="cd01043">
    <property type="entry name" value="DPS"/>
    <property type="match status" value="1"/>
</dbReference>
<dbReference type="Gene3D" id="1.20.1260.10">
    <property type="match status" value="1"/>
</dbReference>
<dbReference type="InterPro" id="IPR002177">
    <property type="entry name" value="DPS_DNA-bd"/>
</dbReference>
<dbReference type="InterPro" id="IPR023188">
    <property type="entry name" value="DPS_DNA-bd_CS"/>
</dbReference>
<dbReference type="InterPro" id="IPR012347">
    <property type="entry name" value="Ferritin-like"/>
</dbReference>
<dbReference type="InterPro" id="IPR009078">
    <property type="entry name" value="Ferritin-like_SF"/>
</dbReference>
<dbReference type="InterPro" id="IPR008331">
    <property type="entry name" value="Ferritin_DPS_dom"/>
</dbReference>
<dbReference type="PANTHER" id="PTHR42932">
    <property type="entry name" value="GENERAL STRESS PROTEIN 20U"/>
    <property type="match status" value="1"/>
</dbReference>
<dbReference type="PANTHER" id="PTHR42932:SF1">
    <property type="entry name" value="GENERAL STRESS PROTEIN 20U"/>
    <property type="match status" value="1"/>
</dbReference>
<dbReference type="Pfam" id="PF00210">
    <property type="entry name" value="Ferritin"/>
    <property type="match status" value="1"/>
</dbReference>
<dbReference type="PIRSF" id="PIRSF005900">
    <property type="entry name" value="Dps"/>
    <property type="match status" value="1"/>
</dbReference>
<dbReference type="SUPFAM" id="SSF47240">
    <property type="entry name" value="Ferritin-like"/>
    <property type="match status" value="1"/>
</dbReference>
<dbReference type="PROSITE" id="PS00819">
    <property type="entry name" value="DPS_2"/>
    <property type="match status" value="1"/>
</dbReference>
<accession>Q8YQL3</accession>
<comment type="function">
    <text evidence="1">Involved in protection of chromosomal DNA from damage under nutrient-limited and oxidative stress conditions. Binds heme (By similarity).</text>
</comment>
<comment type="subunit">
    <text evidence="1">Hexamer.</text>
</comment>
<comment type="similarity">
    <text evidence="2">Belongs to the Dps family.</text>
</comment>
<evidence type="ECO:0000250" key="1"/>
<evidence type="ECO:0000305" key="2"/>
<name>DPSA_NOSS1</name>